<dbReference type="EMBL" id="U62431">
    <property type="protein sequence ID" value="AAB40109.1"/>
    <property type="molecule type" value="mRNA"/>
</dbReference>
<dbReference type="EMBL" id="Y16281">
    <property type="protein sequence ID" value="CAA76154.1"/>
    <property type="molecule type" value="mRNA"/>
</dbReference>
<dbReference type="EMBL" id="AK296348">
    <property type="protein sequence ID" value="BAG59031.1"/>
    <property type="molecule type" value="mRNA"/>
</dbReference>
<dbReference type="EMBL" id="AF311103">
    <property type="status" value="NOT_ANNOTATED_CDS"/>
    <property type="molecule type" value="Genomic_DNA"/>
</dbReference>
<dbReference type="EMBL" id="BC153866">
    <property type="protein sequence ID" value="AAI53867.1"/>
    <property type="molecule type" value="mRNA"/>
</dbReference>
<dbReference type="CCDS" id="CCDS6059.1">
    <molecule id="Q15822-1"/>
</dbReference>
<dbReference type="CCDS" id="CCDS64856.1">
    <molecule id="Q15822-2"/>
</dbReference>
<dbReference type="RefSeq" id="NP_000733.2">
    <molecule id="Q15822-1"/>
    <property type="nucleotide sequence ID" value="NM_000742.4"/>
</dbReference>
<dbReference type="RefSeq" id="NP_001269384.1">
    <molecule id="Q15822-2"/>
    <property type="nucleotide sequence ID" value="NM_001282455.2"/>
</dbReference>
<dbReference type="RefSeq" id="XP_006716345.1">
    <property type="nucleotide sequence ID" value="XM_006716282.1"/>
</dbReference>
<dbReference type="RefSeq" id="XP_011542690.1">
    <property type="nucleotide sequence ID" value="XM_011544388.1"/>
</dbReference>
<dbReference type="RefSeq" id="XP_047277267.1">
    <molecule id="Q15822-1"/>
    <property type="nucleotide sequence ID" value="XM_047421311.1"/>
</dbReference>
<dbReference type="RefSeq" id="XP_047277268.1">
    <molecule id="Q15822-1"/>
    <property type="nucleotide sequence ID" value="XM_047421312.1"/>
</dbReference>
<dbReference type="RefSeq" id="XP_047277269.1">
    <molecule id="Q15822-1"/>
    <property type="nucleotide sequence ID" value="XM_047421313.1"/>
</dbReference>
<dbReference type="RefSeq" id="XP_054215658.1">
    <molecule id="Q15822-1"/>
    <property type="nucleotide sequence ID" value="XM_054359683.1"/>
</dbReference>
<dbReference type="RefSeq" id="XP_054215659.1">
    <molecule id="Q15822-1"/>
    <property type="nucleotide sequence ID" value="XM_054359684.1"/>
</dbReference>
<dbReference type="RefSeq" id="XP_054215660.1">
    <molecule id="Q15822-1"/>
    <property type="nucleotide sequence ID" value="XM_054359685.1"/>
</dbReference>
<dbReference type="PDB" id="5FJV">
    <property type="method" value="X-ray"/>
    <property type="resolution" value="3.20 A"/>
    <property type="chains" value="A/B/C/D/E=59-265"/>
</dbReference>
<dbReference type="PDBsum" id="5FJV"/>
<dbReference type="SMR" id="Q15822"/>
<dbReference type="ComplexPortal" id="CPX-2170">
    <property type="entry name" value="Neuronal nicotinic acetylcholine receptor complex, alpha2-beta2"/>
</dbReference>
<dbReference type="ComplexPortal" id="CPX-2190">
    <property type="entry name" value="Neuronal nicotinic acetylcholine receptor complex, alpha2-beta4"/>
</dbReference>
<dbReference type="CORUM" id="Q15822"/>
<dbReference type="FunCoup" id="Q15822">
    <property type="interactions" value="493"/>
</dbReference>
<dbReference type="STRING" id="9606.ENSP00000385026"/>
<dbReference type="BindingDB" id="Q15822"/>
<dbReference type="ChEMBL" id="CHEMBL2109230"/>
<dbReference type="ChEMBL" id="CHEMBL2109236"/>
<dbReference type="DrugBank" id="DB15096">
    <property type="generic name" value="18-methoxycoronaridine"/>
</dbReference>
<dbReference type="DrugBank" id="DB00732">
    <property type="generic name" value="Atracurium besylate"/>
</dbReference>
<dbReference type="DrugBank" id="DB00237">
    <property type="generic name" value="Butabarbital"/>
</dbReference>
<dbReference type="DrugBank" id="DB00411">
    <property type="generic name" value="Carbamoylcholine"/>
</dbReference>
<dbReference type="DrugBank" id="DB00122">
    <property type="generic name" value="Choline"/>
</dbReference>
<dbReference type="DrugBank" id="DB00565">
    <property type="generic name" value="Cisatracurium"/>
</dbReference>
<dbReference type="DrugBank" id="DB09028">
    <property type="generic name" value="Cytisine"/>
</dbReference>
<dbReference type="DrugBank" id="DB01245">
    <property type="generic name" value="Decamethonium"/>
</dbReference>
<dbReference type="DrugBank" id="DB00514">
    <property type="generic name" value="Dextromethorphan"/>
</dbReference>
<dbReference type="DrugBank" id="DB01135">
    <property type="generic name" value="Doxacurium"/>
</dbReference>
<dbReference type="DrugBank" id="DB07720">
    <property type="generic name" value="Epibatidine"/>
</dbReference>
<dbReference type="DrugBank" id="DB00898">
    <property type="generic name" value="Ethanol"/>
</dbReference>
<dbReference type="DrugBank" id="DB00472">
    <property type="generic name" value="Fluoxetine"/>
</dbReference>
<dbReference type="DrugBank" id="DB00483">
    <property type="generic name" value="Gallamine triethiodide"/>
</dbReference>
<dbReference type="DrugBank" id="DB08960">
    <property type="generic name" value="Hexamethonium"/>
</dbReference>
<dbReference type="DrugBank" id="DB00504">
    <property type="generic name" value="Levallorphan"/>
</dbReference>
<dbReference type="DrugBank" id="DB00657">
    <property type="generic name" value="Mecamylamine"/>
</dbReference>
<dbReference type="DrugBank" id="DB01336">
    <property type="generic name" value="Metocurine"/>
</dbReference>
<dbReference type="DrugBank" id="DB00416">
    <property type="generic name" value="Metocurine iodide"/>
</dbReference>
<dbReference type="DrugBank" id="DB01226">
    <property type="generic name" value="Mivacurium"/>
</dbReference>
<dbReference type="DrugBank" id="DB00184">
    <property type="generic name" value="Nicotine"/>
</dbReference>
<dbReference type="DrugBank" id="DB01337">
    <property type="generic name" value="Pancuronium"/>
</dbReference>
<dbReference type="DrugBank" id="DB01338">
    <property type="generic name" value="Pipecuronium"/>
</dbReference>
<dbReference type="DrugBank" id="DB00721">
    <property type="generic name" value="Procaine"/>
</dbReference>
<dbReference type="DrugBank" id="DB00728">
    <property type="generic name" value="Rocuronium"/>
</dbReference>
<dbReference type="DrugBank" id="DB05740">
    <property type="generic name" value="RPI-78M"/>
</dbReference>
<dbReference type="DrugBank" id="DB00202">
    <property type="generic name" value="Succinylcholine"/>
</dbReference>
<dbReference type="DrugBank" id="DB06402">
    <property type="generic name" value="Telavancin"/>
</dbReference>
<dbReference type="DrugBank" id="DB01199">
    <property type="generic name" value="Tubocurarine"/>
</dbReference>
<dbReference type="DrugBank" id="DB01339">
    <property type="generic name" value="Vecuronium"/>
</dbReference>
<dbReference type="DrugCentral" id="Q15822"/>
<dbReference type="GuidetoPHARMACOLOGY" id="463"/>
<dbReference type="GlyCosmos" id="Q15822">
    <property type="glycosylation" value="3 sites, No reported glycans"/>
</dbReference>
<dbReference type="GlyGen" id="Q15822">
    <property type="glycosylation" value="3 sites"/>
</dbReference>
<dbReference type="iPTMnet" id="Q15822"/>
<dbReference type="PhosphoSitePlus" id="Q15822"/>
<dbReference type="BioMuta" id="CHRNA2"/>
<dbReference type="DMDM" id="308153405"/>
<dbReference type="PaxDb" id="9606-ENSP00000385026"/>
<dbReference type="PeptideAtlas" id="Q15822"/>
<dbReference type="ProteomicsDB" id="60776">
    <molecule id="Q15822-1"/>
</dbReference>
<dbReference type="Antibodypedia" id="10197">
    <property type="antibodies" value="165 antibodies from 25 providers"/>
</dbReference>
<dbReference type="DNASU" id="1135"/>
<dbReference type="Ensembl" id="ENST00000240132.7">
    <molecule id="Q15822-2"/>
    <property type="protein sequence ID" value="ENSP00000240132.2"/>
    <property type="gene ID" value="ENSG00000120903.13"/>
</dbReference>
<dbReference type="Ensembl" id="ENST00000407991.3">
    <molecule id="Q15822-1"/>
    <property type="protein sequence ID" value="ENSP00000385026.1"/>
    <property type="gene ID" value="ENSG00000120903.13"/>
</dbReference>
<dbReference type="GeneID" id="1135"/>
<dbReference type="KEGG" id="hsa:1135"/>
<dbReference type="MANE-Select" id="ENST00000407991.3">
    <property type="protein sequence ID" value="ENSP00000385026.1"/>
    <property type="RefSeq nucleotide sequence ID" value="NM_000742.4"/>
    <property type="RefSeq protein sequence ID" value="NP_000733.2"/>
</dbReference>
<dbReference type="UCSC" id="uc010lur.4">
    <molecule id="Q15822-1"/>
    <property type="organism name" value="human"/>
</dbReference>
<dbReference type="AGR" id="HGNC:1956"/>
<dbReference type="CTD" id="1135"/>
<dbReference type="DisGeNET" id="1135"/>
<dbReference type="GeneCards" id="CHRNA2"/>
<dbReference type="GeneReviews" id="CHRNA2"/>
<dbReference type="HGNC" id="HGNC:1956">
    <property type="gene designation" value="CHRNA2"/>
</dbReference>
<dbReference type="HPA" id="ENSG00000120903">
    <property type="expression patterns" value="Tissue enriched (prostate)"/>
</dbReference>
<dbReference type="MalaCards" id="CHRNA2"/>
<dbReference type="MIM" id="118502">
    <property type="type" value="gene"/>
</dbReference>
<dbReference type="MIM" id="610353">
    <property type="type" value="phenotype"/>
</dbReference>
<dbReference type="neXtProt" id="NX_Q15822"/>
<dbReference type="OpenTargets" id="ENSG00000120903"/>
<dbReference type="Orphanet" id="98784">
    <property type="disease" value="Sleep-related hypermotor epilepsy"/>
</dbReference>
<dbReference type="PharmGKB" id="PA26489"/>
<dbReference type="VEuPathDB" id="HostDB:ENSG00000120903"/>
<dbReference type="eggNOG" id="KOG3645">
    <property type="taxonomic scope" value="Eukaryota"/>
</dbReference>
<dbReference type="GeneTree" id="ENSGT00940000158299"/>
<dbReference type="HOGENOM" id="CLU_018074_1_0_1"/>
<dbReference type="InParanoid" id="Q15822"/>
<dbReference type="OMA" id="SSYHWLE"/>
<dbReference type="OrthoDB" id="5975154at2759"/>
<dbReference type="PAN-GO" id="Q15822">
    <property type="GO annotations" value="10 GO annotations based on evolutionary models"/>
</dbReference>
<dbReference type="PhylomeDB" id="Q15822"/>
<dbReference type="TreeFam" id="TF315605"/>
<dbReference type="PathwayCommons" id="Q15822"/>
<dbReference type="Reactome" id="R-HSA-629594">
    <property type="pathway name" value="Highly calcium permeable postsynaptic nicotinic acetylcholine receptors"/>
</dbReference>
<dbReference type="Reactome" id="R-HSA-629597">
    <property type="pathway name" value="Highly calcium permeable nicotinic acetylcholine receptors"/>
</dbReference>
<dbReference type="SignaLink" id="Q15822"/>
<dbReference type="BioGRID-ORCS" id="1135">
    <property type="hits" value="15 hits in 1164 CRISPR screens"/>
</dbReference>
<dbReference type="ChiTaRS" id="CHRNA2">
    <property type="organism name" value="human"/>
</dbReference>
<dbReference type="GeneWiki" id="CHRNA2"/>
<dbReference type="GenomeRNAi" id="1135"/>
<dbReference type="Pharos" id="Q15822">
    <property type="development level" value="Tchem"/>
</dbReference>
<dbReference type="PRO" id="PR:Q15822"/>
<dbReference type="Proteomes" id="UP000005640">
    <property type="component" value="Chromosome 8"/>
</dbReference>
<dbReference type="RNAct" id="Q15822">
    <property type="molecule type" value="protein"/>
</dbReference>
<dbReference type="Bgee" id="ENSG00000120903">
    <property type="expression patterns" value="Expressed in primordial germ cell in gonad and 139 other cell types or tissues"/>
</dbReference>
<dbReference type="ExpressionAtlas" id="Q15822">
    <property type="expression patterns" value="baseline and differential"/>
</dbReference>
<dbReference type="GO" id="GO:0005892">
    <property type="term" value="C:acetylcholine-gated channel complex"/>
    <property type="evidence" value="ECO:0000314"/>
    <property type="project" value="UniProtKB"/>
</dbReference>
<dbReference type="GO" id="GO:0034703">
    <property type="term" value="C:cation channel complex"/>
    <property type="evidence" value="ECO:0000314"/>
    <property type="project" value="UniProt"/>
</dbReference>
<dbReference type="GO" id="GO:0045171">
    <property type="term" value="C:intercellular bridge"/>
    <property type="evidence" value="ECO:0000314"/>
    <property type="project" value="HPA"/>
</dbReference>
<dbReference type="GO" id="GO:0016020">
    <property type="term" value="C:membrane"/>
    <property type="evidence" value="ECO:0000303"/>
    <property type="project" value="UniProtKB"/>
</dbReference>
<dbReference type="GO" id="GO:0043005">
    <property type="term" value="C:neuron projection"/>
    <property type="evidence" value="ECO:0000318"/>
    <property type="project" value="GO_Central"/>
</dbReference>
<dbReference type="GO" id="GO:0120111">
    <property type="term" value="C:neuron projection cytoplasm"/>
    <property type="evidence" value="ECO:0007669"/>
    <property type="project" value="Ensembl"/>
</dbReference>
<dbReference type="GO" id="GO:0098878">
    <property type="term" value="C:neurotransmitter receptor complex"/>
    <property type="evidence" value="ECO:0000314"/>
    <property type="project" value="UniProt"/>
</dbReference>
<dbReference type="GO" id="GO:0005654">
    <property type="term" value="C:nucleoplasm"/>
    <property type="evidence" value="ECO:0000314"/>
    <property type="project" value="HPA"/>
</dbReference>
<dbReference type="GO" id="GO:0005886">
    <property type="term" value="C:plasma membrane"/>
    <property type="evidence" value="ECO:0000314"/>
    <property type="project" value="HPA"/>
</dbReference>
<dbReference type="GO" id="GO:0045211">
    <property type="term" value="C:postsynaptic membrane"/>
    <property type="evidence" value="ECO:0007669"/>
    <property type="project" value="UniProtKB-KW"/>
</dbReference>
<dbReference type="GO" id="GO:0045202">
    <property type="term" value="C:synapse"/>
    <property type="evidence" value="ECO:0000318"/>
    <property type="project" value="GO_Central"/>
</dbReference>
<dbReference type="GO" id="GO:0015464">
    <property type="term" value="F:acetylcholine receptor activity"/>
    <property type="evidence" value="ECO:0000314"/>
    <property type="project" value="UniProtKB"/>
</dbReference>
<dbReference type="GO" id="GO:0022848">
    <property type="term" value="F:acetylcholine-gated monoatomic cation-selective channel activity"/>
    <property type="evidence" value="ECO:0000314"/>
    <property type="project" value="UniProtKB"/>
</dbReference>
<dbReference type="GO" id="GO:1901363">
    <property type="term" value="F:heterocyclic compound binding"/>
    <property type="evidence" value="ECO:0007669"/>
    <property type="project" value="Ensembl"/>
</dbReference>
<dbReference type="GO" id="GO:0050997">
    <property type="term" value="F:quaternary ammonium group binding"/>
    <property type="evidence" value="ECO:0007669"/>
    <property type="project" value="Ensembl"/>
</dbReference>
<dbReference type="GO" id="GO:0095500">
    <property type="term" value="P:acetylcholine receptor signaling pathway"/>
    <property type="evidence" value="ECO:0000318"/>
    <property type="project" value="GO_Central"/>
</dbReference>
<dbReference type="GO" id="GO:0071316">
    <property type="term" value="P:cellular response to nicotine"/>
    <property type="evidence" value="ECO:0007669"/>
    <property type="project" value="Ensembl"/>
</dbReference>
<dbReference type="GO" id="GO:0051899">
    <property type="term" value="P:membrane depolarization"/>
    <property type="evidence" value="ECO:0000318"/>
    <property type="project" value="GO_Central"/>
</dbReference>
<dbReference type="GO" id="GO:0098828">
    <property type="term" value="P:modulation of inhibitory postsynaptic potential"/>
    <property type="evidence" value="ECO:0007669"/>
    <property type="project" value="Ensembl"/>
</dbReference>
<dbReference type="GO" id="GO:0034220">
    <property type="term" value="P:monoatomic ion transmembrane transport"/>
    <property type="evidence" value="ECO:0000318"/>
    <property type="project" value="GO_Central"/>
</dbReference>
<dbReference type="GO" id="GO:0006811">
    <property type="term" value="P:monoatomic ion transport"/>
    <property type="evidence" value="ECO:0000303"/>
    <property type="project" value="UniProtKB"/>
</dbReference>
<dbReference type="GO" id="GO:0007274">
    <property type="term" value="P:neuromuscular synaptic transmission"/>
    <property type="evidence" value="ECO:0000318"/>
    <property type="project" value="GO_Central"/>
</dbReference>
<dbReference type="GO" id="GO:0035094">
    <property type="term" value="P:response to nicotine"/>
    <property type="evidence" value="ECO:0000318"/>
    <property type="project" value="GO_Central"/>
</dbReference>
<dbReference type="GO" id="GO:0007165">
    <property type="term" value="P:signal transduction"/>
    <property type="evidence" value="ECO:0000314"/>
    <property type="project" value="UniProtKB"/>
</dbReference>
<dbReference type="GO" id="GO:0007271">
    <property type="term" value="P:synaptic transmission, cholinergic"/>
    <property type="evidence" value="ECO:0000318"/>
    <property type="project" value="GO_Central"/>
</dbReference>
<dbReference type="CDD" id="cd19015">
    <property type="entry name" value="LGIC_ECD_nAChR_A2"/>
    <property type="match status" value="1"/>
</dbReference>
<dbReference type="CDD" id="cd19064">
    <property type="entry name" value="LGIC_TM_nAChR"/>
    <property type="match status" value="1"/>
</dbReference>
<dbReference type="FunFam" id="1.20.58.390:FF:000014">
    <property type="entry name" value="Neuronal nicotinic acetylcholine receptor alpha4 subunit"/>
    <property type="match status" value="1"/>
</dbReference>
<dbReference type="FunFam" id="2.70.170.10:FF:000005">
    <property type="entry name" value="Neuronal nicotinic acetylcholine receptor alpha4 subunit"/>
    <property type="match status" value="1"/>
</dbReference>
<dbReference type="FunFam" id="1.20.58.390:FF:000001">
    <property type="entry name" value="Neuronal nicotinic acetylcholine receptor subunit 3"/>
    <property type="match status" value="1"/>
</dbReference>
<dbReference type="Gene3D" id="2.70.170.10">
    <property type="entry name" value="Neurotransmitter-gated ion-channel ligand-binding domain"/>
    <property type="match status" value="1"/>
</dbReference>
<dbReference type="Gene3D" id="1.20.58.390">
    <property type="entry name" value="Neurotransmitter-gated ion-channel transmembrane domain"/>
    <property type="match status" value="2"/>
</dbReference>
<dbReference type="InterPro" id="IPR006202">
    <property type="entry name" value="Neur_chan_lig-bd"/>
</dbReference>
<dbReference type="InterPro" id="IPR036734">
    <property type="entry name" value="Neur_chan_lig-bd_sf"/>
</dbReference>
<dbReference type="InterPro" id="IPR006201">
    <property type="entry name" value="Neur_channel"/>
</dbReference>
<dbReference type="InterPro" id="IPR036719">
    <property type="entry name" value="Neuro-gated_channel_TM_sf"/>
</dbReference>
<dbReference type="InterPro" id="IPR038050">
    <property type="entry name" value="Neuro_actylchol_rec"/>
</dbReference>
<dbReference type="InterPro" id="IPR006029">
    <property type="entry name" value="Neurotrans-gated_channel_TM"/>
</dbReference>
<dbReference type="InterPro" id="IPR018000">
    <property type="entry name" value="Neurotransmitter_ion_chnl_CS"/>
</dbReference>
<dbReference type="InterPro" id="IPR002394">
    <property type="entry name" value="Nicotinic_acetylcholine_rcpt"/>
</dbReference>
<dbReference type="NCBIfam" id="TIGR00860">
    <property type="entry name" value="LIC"/>
    <property type="match status" value="1"/>
</dbReference>
<dbReference type="PANTHER" id="PTHR18945">
    <property type="entry name" value="NEUROTRANSMITTER GATED ION CHANNEL"/>
    <property type="match status" value="1"/>
</dbReference>
<dbReference type="Pfam" id="PF02931">
    <property type="entry name" value="Neur_chan_LBD"/>
    <property type="match status" value="1"/>
</dbReference>
<dbReference type="Pfam" id="PF02932">
    <property type="entry name" value="Neur_chan_memb"/>
    <property type="match status" value="1"/>
</dbReference>
<dbReference type="PRINTS" id="PR00254">
    <property type="entry name" value="NICOTINICR"/>
</dbReference>
<dbReference type="PRINTS" id="PR00252">
    <property type="entry name" value="NRIONCHANNEL"/>
</dbReference>
<dbReference type="SUPFAM" id="SSF90112">
    <property type="entry name" value="Neurotransmitter-gated ion-channel transmembrane pore"/>
    <property type="match status" value="1"/>
</dbReference>
<dbReference type="SUPFAM" id="SSF63712">
    <property type="entry name" value="Nicotinic receptor ligand binding domain-like"/>
    <property type="match status" value="1"/>
</dbReference>
<dbReference type="PROSITE" id="PS00236">
    <property type="entry name" value="NEUROTR_ION_CHANNEL"/>
    <property type="match status" value="1"/>
</dbReference>
<name>ACHA2_HUMAN</name>
<sequence length="529" mass="59765">MGPSCPVFLSFTKLSLWWLLLTPAGGEEAKRPPPRAPGDPLSSPSPTALPQGGSHTETEDRLFKHLFRGYNRWARPVPNTSDVVIVRFGLSIAQLIDVDEKNQMMTTNVWLKQEWSDYKLRWNPTDFGNITSLRVPSEMIWIPDIVLYNNADGEFAVTHMTKAHLFSTGTVHWVPPAIYKSSCSIDVTFFPFDQQNCKMKFGSWTYDKAKIDLEQMEQTVDLKDYWESGEWAIVNATGTYNSKKYDCCAEIYPDVTYAFVIRRLPLFYTINLIIPCLLISCLTVLVFYLPSDCGEKITLCISVLLSLTVFLLLITEIIPSTSLVIPLIGEYLLFTMIFVTLSIVITVFVLNVHHRSPSTHTMPHWVRGALLGCVPRWLLMNRPPPPVELCHPLRLKLSPSYHWLESNVDAEEREVVVEEEDRWACAGHVAPSVGTLCSHGHLHSGASGPKAEALLQEGELLLSPHMQKALEGVHYIADHLRSEDADSSVKEDWKYVAMVIDRIFLWLFIIVCFLGTIGLFLPPFLAGMI</sequence>
<feature type="signal peptide" evidence="3">
    <location>
        <begin position="1"/>
        <end position="26"/>
    </location>
</feature>
<feature type="chain" id="PRO_0000000340" description="Neuronal acetylcholine receptor subunit alpha-2">
    <location>
        <begin position="27"/>
        <end position="529"/>
    </location>
</feature>
<feature type="topological domain" description="Extracellular">
    <location>
        <begin position="27"/>
        <end position="264"/>
    </location>
</feature>
<feature type="transmembrane region" description="Helical" evidence="3">
    <location>
        <begin position="265"/>
        <end position="289"/>
    </location>
</feature>
<feature type="transmembrane region" description="Helical" evidence="3">
    <location>
        <begin position="297"/>
        <end position="315"/>
    </location>
</feature>
<feature type="transmembrane region" description="Helical" evidence="3">
    <location>
        <begin position="331"/>
        <end position="352"/>
    </location>
</feature>
<feature type="topological domain" description="Cytoplasmic">
    <location>
        <begin position="353"/>
        <end position="502"/>
    </location>
</feature>
<feature type="transmembrane region" description="Helical" evidence="3">
    <location>
        <begin position="503"/>
        <end position="521"/>
    </location>
</feature>
<feature type="region of interest" description="Disordered" evidence="4">
    <location>
        <begin position="27"/>
        <end position="56"/>
    </location>
</feature>
<feature type="glycosylation site" description="N-linked (GlcNAc...) asparagine" evidence="3">
    <location>
        <position position="79"/>
    </location>
</feature>
<feature type="glycosylation site" description="N-linked (GlcNAc...) asparagine" evidence="3">
    <location>
        <position position="129"/>
    </location>
</feature>
<feature type="glycosylation site" description="N-linked (GlcNAc...) asparagine" evidence="3">
    <location>
        <position position="235"/>
    </location>
</feature>
<feature type="disulfide bond" evidence="9 17">
    <location>
        <begin position="183"/>
        <end position="197"/>
    </location>
</feature>
<feature type="disulfide bond" description="Associated with receptor activation" evidence="9 17">
    <location>
        <begin position="247"/>
        <end position="248"/>
    </location>
</feature>
<feature type="splice variant" id="VSP_055156" description="In isoform 2." evidence="12">
    <location>
        <begin position="82"/>
        <end position="96"/>
    </location>
</feature>
<feature type="sequence variant" id="VAR_027639" description="Associated with nicotine dependence; decreased response to acetylcholine and nicotine of LS nAChRs and increased response to acetylcholine and nicotine of HS nAChRs; dbSNP:rs2472553." evidence="7">
    <original>T</original>
    <variation>I</variation>
    <location>
        <position position="22"/>
    </location>
</feature>
<feature type="sequence variant" id="VAR_027640" description="In dbSNP:rs891398." evidence="5 10 11">
    <original>T</original>
    <variation>A</variation>
    <location>
        <position position="125"/>
    </location>
</feature>
<feature type="sequence variant" id="VAR_027641" description="In ENFL4; markedly increases receptor sensitivity to acetylcholine; dbSNP:rs104894063." evidence="6">
    <original>I</original>
    <variation>N</variation>
    <location>
        <position position="279"/>
    </location>
</feature>
<feature type="sequence variant" id="VAR_076498" description="In BFIS6; uncertain significance; dbSNP:rs1018084204." evidence="8">
    <original>R</original>
    <variation>W</variation>
    <location>
        <position position="376"/>
    </location>
</feature>
<feature type="mutagenesis site" description="Changes ligand activation kinetics in a alpha-2(+):alpha-2(-) subunit interface (in LS nAChR subtype)." evidence="9">
    <original>W</original>
    <variation>A</variation>
    <location>
        <position position="115"/>
    </location>
</feature>
<feature type="mutagenesis site" description="Decreases ligand activation in LS nAChR subtype; no effect in HS nAChR subtype." evidence="9">
    <original>Y</original>
    <variation>F</variation>
    <location>
        <position position="225"/>
    </location>
</feature>
<feature type="helix" evidence="18">
    <location>
        <begin position="61"/>
        <end position="69"/>
    </location>
</feature>
<feature type="strand" evidence="18">
    <location>
        <begin position="74"/>
        <end position="76"/>
    </location>
</feature>
<feature type="strand" evidence="18">
    <location>
        <begin position="78"/>
        <end position="82"/>
    </location>
</feature>
<feature type="strand" evidence="18">
    <location>
        <begin position="84"/>
        <end position="99"/>
    </location>
</feature>
<feature type="turn" evidence="18">
    <location>
        <begin position="100"/>
        <end position="103"/>
    </location>
</feature>
<feature type="strand" evidence="18">
    <location>
        <begin position="104"/>
        <end position="116"/>
    </location>
</feature>
<feature type="helix" evidence="18">
    <location>
        <begin position="118"/>
        <end position="120"/>
    </location>
</feature>
<feature type="turn" evidence="18">
    <location>
        <begin position="124"/>
        <end position="129"/>
    </location>
</feature>
<feature type="strand" evidence="18">
    <location>
        <begin position="131"/>
        <end position="136"/>
    </location>
</feature>
<feature type="turn" evidence="18">
    <location>
        <begin position="137"/>
        <end position="139"/>
    </location>
</feature>
<feature type="strand" evidence="18">
    <location>
        <begin position="145"/>
        <end position="147"/>
    </location>
</feature>
<feature type="turn" evidence="18">
    <location>
        <begin position="148"/>
        <end position="150"/>
    </location>
</feature>
<feature type="strand" evidence="18">
    <location>
        <begin position="162"/>
        <end position="166"/>
    </location>
</feature>
<feature type="turn" evidence="18">
    <location>
        <begin position="167"/>
        <end position="169"/>
    </location>
</feature>
<feature type="strand" evidence="18">
    <location>
        <begin position="170"/>
        <end position="173"/>
    </location>
</feature>
<feature type="strand" evidence="18">
    <location>
        <begin position="176"/>
        <end position="182"/>
    </location>
</feature>
<feature type="strand" evidence="18">
    <location>
        <begin position="190"/>
        <end position="192"/>
    </location>
</feature>
<feature type="strand" evidence="18">
    <location>
        <begin position="198"/>
        <end position="205"/>
    </location>
</feature>
<feature type="turn" evidence="18">
    <location>
        <begin position="208"/>
        <end position="210"/>
    </location>
</feature>
<feature type="strand" evidence="18">
    <location>
        <begin position="211"/>
        <end position="215"/>
    </location>
</feature>
<feature type="turn" evidence="18">
    <location>
        <begin position="217"/>
        <end position="219"/>
    </location>
</feature>
<feature type="strand" evidence="18">
    <location>
        <begin position="237"/>
        <end position="245"/>
    </location>
</feature>
<feature type="strand" evidence="18">
    <location>
        <begin position="248"/>
        <end position="258"/>
    </location>
</feature>
<organism>
    <name type="scientific">Homo sapiens</name>
    <name type="common">Human</name>
    <dbReference type="NCBI Taxonomy" id="9606"/>
    <lineage>
        <taxon>Eukaryota</taxon>
        <taxon>Metazoa</taxon>
        <taxon>Chordata</taxon>
        <taxon>Craniata</taxon>
        <taxon>Vertebrata</taxon>
        <taxon>Euteleostomi</taxon>
        <taxon>Mammalia</taxon>
        <taxon>Eutheria</taxon>
        <taxon>Euarchontoglires</taxon>
        <taxon>Primates</taxon>
        <taxon>Haplorrhini</taxon>
        <taxon>Catarrhini</taxon>
        <taxon>Hominidae</taxon>
        <taxon>Homo</taxon>
    </lineage>
</organism>
<proteinExistence type="evidence at protein level"/>
<reference key="1">
    <citation type="journal article" date="1996" name="J. Mol. Neurosci.">
        <title>Comparative structure of human neuronal alpha 2-alpha 7 and beta 2-beta 4 nicotinic acetylcholine receptor subunits and functional expression of the alpha 2, alpha 3, alpha 4, alpha 7, beta 2, and beta 4 subunits.</title>
        <authorList>
            <person name="Elliott K.J."/>
            <person name="Ellis S.B."/>
            <person name="Berckhan K.J."/>
            <person name="Urrutia A."/>
            <person name="Chavez-Noriega L.E."/>
            <person name="Johnson E.C."/>
            <person name="Velicelebi G."/>
            <person name="Harpold M.M."/>
        </authorList>
    </citation>
    <scope>NUCLEOTIDE SEQUENCE [MRNA] (ISOFORM 1)</scope>
    <scope>VARIANT ALA-125</scope>
    <scope>FUNCTION</scope>
    <scope>SUBUNIT</scope>
    <scope>ACTIVITY REGULATION</scope>
    <source>
        <tissue>Hypothalamus</tissue>
    </source>
</reference>
<reference key="2">
    <citation type="submission" date="1998-01" db="EMBL/GenBank/DDBJ databases">
        <authorList>
            <person name="Groot Kormelink P.J."/>
        </authorList>
    </citation>
    <scope>NUCLEOTIDE SEQUENCE [MRNA] (ISOFORM 1)</scope>
    <scope>VARIANT ALA-125</scope>
</reference>
<reference key="3">
    <citation type="journal article" date="2004" name="Nat. Genet.">
        <title>Complete sequencing and characterization of 21,243 full-length human cDNAs.</title>
        <authorList>
            <person name="Ota T."/>
            <person name="Suzuki Y."/>
            <person name="Nishikawa T."/>
            <person name="Otsuki T."/>
            <person name="Sugiyama T."/>
            <person name="Irie R."/>
            <person name="Wakamatsu A."/>
            <person name="Hayashi K."/>
            <person name="Sato H."/>
            <person name="Nagai K."/>
            <person name="Kimura K."/>
            <person name="Makita H."/>
            <person name="Sekine M."/>
            <person name="Obayashi M."/>
            <person name="Nishi T."/>
            <person name="Shibahara T."/>
            <person name="Tanaka T."/>
            <person name="Ishii S."/>
            <person name="Yamamoto J."/>
            <person name="Saito K."/>
            <person name="Kawai Y."/>
            <person name="Isono Y."/>
            <person name="Nakamura Y."/>
            <person name="Nagahari K."/>
            <person name="Murakami K."/>
            <person name="Yasuda T."/>
            <person name="Iwayanagi T."/>
            <person name="Wagatsuma M."/>
            <person name="Shiratori A."/>
            <person name="Sudo H."/>
            <person name="Hosoiri T."/>
            <person name="Kaku Y."/>
            <person name="Kodaira H."/>
            <person name="Kondo H."/>
            <person name="Sugawara M."/>
            <person name="Takahashi M."/>
            <person name="Kanda K."/>
            <person name="Yokoi T."/>
            <person name="Furuya T."/>
            <person name="Kikkawa E."/>
            <person name="Omura Y."/>
            <person name="Abe K."/>
            <person name="Kamihara K."/>
            <person name="Katsuta N."/>
            <person name="Sato K."/>
            <person name="Tanikawa M."/>
            <person name="Yamazaki M."/>
            <person name="Ninomiya K."/>
            <person name="Ishibashi T."/>
            <person name="Yamashita H."/>
            <person name="Murakawa K."/>
            <person name="Fujimori K."/>
            <person name="Tanai H."/>
            <person name="Kimata M."/>
            <person name="Watanabe M."/>
            <person name="Hiraoka S."/>
            <person name="Chiba Y."/>
            <person name="Ishida S."/>
            <person name="Ono Y."/>
            <person name="Takiguchi S."/>
            <person name="Watanabe S."/>
            <person name="Yosida M."/>
            <person name="Hotuta T."/>
            <person name="Kusano J."/>
            <person name="Kanehori K."/>
            <person name="Takahashi-Fujii A."/>
            <person name="Hara H."/>
            <person name="Tanase T.-O."/>
            <person name="Nomura Y."/>
            <person name="Togiya S."/>
            <person name="Komai F."/>
            <person name="Hara R."/>
            <person name="Takeuchi K."/>
            <person name="Arita M."/>
            <person name="Imose N."/>
            <person name="Musashino K."/>
            <person name="Yuuki H."/>
            <person name="Oshima A."/>
            <person name="Sasaki N."/>
            <person name="Aotsuka S."/>
            <person name="Yoshikawa Y."/>
            <person name="Matsunawa H."/>
            <person name="Ichihara T."/>
            <person name="Shiohata N."/>
            <person name="Sano S."/>
            <person name="Moriya S."/>
            <person name="Momiyama H."/>
            <person name="Satoh N."/>
            <person name="Takami S."/>
            <person name="Terashima Y."/>
            <person name="Suzuki O."/>
            <person name="Nakagawa S."/>
            <person name="Senoh A."/>
            <person name="Mizoguchi H."/>
            <person name="Goto Y."/>
            <person name="Shimizu F."/>
            <person name="Wakebe H."/>
            <person name="Hishigaki H."/>
            <person name="Watanabe T."/>
            <person name="Sugiyama A."/>
            <person name="Takemoto M."/>
            <person name="Kawakami B."/>
            <person name="Yamazaki M."/>
            <person name="Watanabe K."/>
            <person name="Kumagai A."/>
            <person name="Itakura S."/>
            <person name="Fukuzumi Y."/>
            <person name="Fujimori Y."/>
            <person name="Komiyama M."/>
            <person name="Tashiro H."/>
            <person name="Tanigami A."/>
            <person name="Fujiwara T."/>
            <person name="Ono T."/>
            <person name="Yamada K."/>
            <person name="Fujii Y."/>
            <person name="Ozaki K."/>
            <person name="Hirao M."/>
            <person name="Ohmori Y."/>
            <person name="Kawabata A."/>
            <person name="Hikiji T."/>
            <person name="Kobatake N."/>
            <person name="Inagaki H."/>
            <person name="Ikema Y."/>
            <person name="Okamoto S."/>
            <person name="Okitani R."/>
            <person name="Kawakami T."/>
            <person name="Noguchi S."/>
            <person name="Itoh T."/>
            <person name="Shigeta K."/>
            <person name="Senba T."/>
            <person name="Matsumura K."/>
            <person name="Nakajima Y."/>
            <person name="Mizuno T."/>
            <person name="Morinaga M."/>
            <person name="Sasaki M."/>
            <person name="Togashi T."/>
            <person name="Oyama M."/>
            <person name="Hata H."/>
            <person name="Watanabe M."/>
            <person name="Komatsu T."/>
            <person name="Mizushima-Sugano J."/>
            <person name="Satoh T."/>
            <person name="Shirai Y."/>
            <person name="Takahashi Y."/>
            <person name="Nakagawa K."/>
            <person name="Okumura K."/>
            <person name="Nagase T."/>
            <person name="Nomura N."/>
            <person name="Kikuchi H."/>
            <person name="Masuho Y."/>
            <person name="Yamashita R."/>
            <person name="Nakai K."/>
            <person name="Yada T."/>
            <person name="Nakamura Y."/>
            <person name="Ohara O."/>
            <person name="Isogai T."/>
            <person name="Sugano S."/>
        </authorList>
    </citation>
    <scope>NUCLEOTIDE SEQUENCE [LARGE SCALE MRNA] (ISOFORM 2)</scope>
    <scope>VARIANT ALA-125</scope>
    <source>
        <tissue>Thalamus</tissue>
    </source>
</reference>
<reference key="4">
    <citation type="journal article" date="2006" name="Nature">
        <title>DNA sequence and analysis of human chromosome 8.</title>
        <authorList>
            <person name="Nusbaum C."/>
            <person name="Mikkelsen T.S."/>
            <person name="Zody M.C."/>
            <person name="Asakawa S."/>
            <person name="Taudien S."/>
            <person name="Garber M."/>
            <person name="Kodira C.D."/>
            <person name="Schueler M.G."/>
            <person name="Shimizu A."/>
            <person name="Whittaker C.A."/>
            <person name="Chang J.L."/>
            <person name="Cuomo C.A."/>
            <person name="Dewar K."/>
            <person name="FitzGerald M.G."/>
            <person name="Yang X."/>
            <person name="Allen N.R."/>
            <person name="Anderson S."/>
            <person name="Asakawa T."/>
            <person name="Blechschmidt K."/>
            <person name="Bloom T."/>
            <person name="Borowsky M.L."/>
            <person name="Butler J."/>
            <person name="Cook A."/>
            <person name="Corum B."/>
            <person name="DeArellano K."/>
            <person name="DeCaprio D."/>
            <person name="Dooley K.T."/>
            <person name="Dorris L. III"/>
            <person name="Engels R."/>
            <person name="Gloeckner G."/>
            <person name="Hafez N."/>
            <person name="Hagopian D.S."/>
            <person name="Hall J.L."/>
            <person name="Ishikawa S.K."/>
            <person name="Jaffe D.B."/>
            <person name="Kamat A."/>
            <person name="Kudoh J."/>
            <person name="Lehmann R."/>
            <person name="Lokitsang T."/>
            <person name="Macdonald P."/>
            <person name="Major J.E."/>
            <person name="Matthews C.D."/>
            <person name="Mauceli E."/>
            <person name="Menzel U."/>
            <person name="Mihalev A.H."/>
            <person name="Minoshima S."/>
            <person name="Murayama Y."/>
            <person name="Naylor J.W."/>
            <person name="Nicol R."/>
            <person name="Nguyen C."/>
            <person name="O'Leary S.B."/>
            <person name="O'Neill K."/>
            <person name="Parker S.C.J."/>
            <person name="Polley A."/>
            <person name="Raymond C.K."/>
            <person name="Reichwald K."/>
            <person name="Rodriguez J."/>
            <person name="Sasaki T."/>
            <person name="Schilhabel M."/>
            <person name="Siddiqui R."/>
            <person name="Smith C.L."/>
            <person name="Sneddon T.P."/>
            <person name="Talamas J.A."/>
            <person name="Tenzin P."/>
            <person name="Topham K."/>
            <person name="Venkataraman V."/>
            <person name="Wen G."/>
            <person name="Yamazaki S."/>
            <person name="Young S.K."/>
            <person name="Zeng Q."/>
            <person name="Zimmer A.R."/>
            <person name="Rosenthal A."/>
            <person name="Birren B.W."/>
            <person name="Platzer M."/>
            <person name="Shimizu N."/>
            <person name="Lander E.S."/>
        </authorList>
    </citation>
    <scope>NUCLEOTIDE SEQUENCE [LARGE SCALE GENOMIC DNA]</scope>
</reference>
<reference key="5">
    <citation type="journal article" date="2004" name="Genome Res.">
        <title>The status, quality, and expansion of the NIH full-length cDNA project: the Mammalian Gene Collection (MGC).</title>
        <authorList>
            <consortium name="The MGC Project Team"/>
        </authorList>
    </citation>
    <scope>NUCLEOTIDE SEQUENCE [LARGE SCALE MRNA] (ISOFORM 1)</scope>
</reference>
<reference key="6">
    <citation type="journal article" date="2009" name="Neuropharmacology">
        <title>Diversity of vertebrate nicotinic acetylcholine receptors.</title>
        <authorList>
            <person name="Millar N.S."/>
            <person name="Gotti C."/>
        </authorList>
    </citation>
    <scope>REVIEW ON NACHRS DIVERSITY</scope>
</reference>
<reference key="7">
    <citation type="journal article" date="2016" name="Proc. Natl. Acad. Sci. U.S.A.">
        <title>Crystal structure of a human neuronal nAChR extracellular domain in pentameric assembly: Ligand-bound alpha2 homopentamer.</title>
        <authorList>
            <person name="Kouvatsos N."/>
            <person name="Giastas P."/>
            <person name="Chroni-Tzartou D."/>
            <person name="Poulopoulou C."/>
            <person name="Tzartos S.J."/>
        </authorList>
    </citation>
    <scope>X-RAY CRYSTALLOGRAPHY (3.20 ANGSTROMS) OF 59-265</scope>
    <scope>FUNCTION</scope>
    <scope>SUBUNIT</scope>
    <scope>MUTAGENESIS OF TRP-115 AND TYR-225</scope>
</reference>
<reference key="8">
    <citation type="journal article" date="2006" name="Am. J. Hum. Genet.">
        <title>Increased sensitivity of the neuronal nicotinic receptor alpha2 subunit causes familial epilepsy with nocturnal wandering and ictal fear.</title>
        <authorList>
            <person name="Aridon P."/>
            <person name="Marini C."/>
            <person name="Di Resta C."/>
            <person name="Brilli E."/>
            <person name="De Fusco M."/>
            <person name="Politi F."/>
            <person name="Parrini E."/>
            <person name="Manfredi I."/>
            <person name="Pisano T."/>
            <person name="Pruna D."/>
            <person name="Curia G."/>
            <person name="Cianchetti C."/>
            <person name="Pasqualetti M."/>
            <person name="Becchetti A."/>
            <person name="Guerrini R."/>
            <person name="Casari G."/>
        </authorList>
    </citation>
    <scope>VARIANT ENFL4 ASN-279</scope>
    <scope>CHARACTERIZATION OF VARIANT ENFL4 ASN-279</scope>
</reference>
<reference key="9">
    <citation type="journal article" date="2014" name="Neuropharmacology">
        <title>A signal peptide missense mutation associated with nicotine dependence alters alpha2*-nicotinic acetylcholine receptor function.</title>
        <authorList>
            <person name="Dash B."/>
            <person name="Lukas R.J."/>
            <person name="Li M.D."/>
        </authorList>
    </citation>
    <scope>VARIANT ILE-22</scope>
    <scope>CHARACTERIZATION OF VARIANT ILE-22</scope>
    <scope>FUNCTION</scope>
    <scope>ACTIVITY REGULATION</scope>
</reference>
<reference key="10">
    <citation type="journal article" date="2015" name="Epilepsia">
        <title>Mutation of CHRNA2 in a family with benign familial infantile seizures: Potential role of nicotinic acetylcholine receptor in various phenotypes of epilepsy.</title>
        <authorList>
            <person name="Trivisano M."/>
            <person name="Terracciano A."/>
            <person name="Milano T."/>
            <person name="Cappelletti S."/>
            <person name="Pietrafusa N."/>
            <person name="Bertini E.S."/>
            <person name="Vigevano F."/>
            <person name="Specchio N."/>
        </authorList>
    </citation>
    <scope>VARIANT BFIS6 TRP-376</scope>
</reference>
<gene>
    <name evidence="16" type="primary">CHRNA2</name>
</gene>
<evidence type="ECO:0000250" key="1">
    <source>
        <dbReference type="UniProtKB" id="P02709"/>
    </source>
</evidence>
<evidence type="ECO:0000250" key="2">
    <source>
        <dbReference type="UniProtKB" id="P43681"/>
    </source>
</evidence>
<evidence type="ECO:0000255" key="3"/>
<evidence type="ECO:0000256" key="4">
    <source>
        <dbReference type="SAM" id="MobiDB-lite"/>
    </source>
</evidence>
<evidence type="ECO:0000269" key="5">
    <source>
    </source>
</evidence>
<evidence type="ECO:0000269" key="6">
    <source>
    </source>
</evidence>
<evidence type="ECO:0000269" key="7">
    <source>
    </source>
</evidence>
<evidence type="ECO:0000269" key="8">
    <source>
    </source>
</evidence>
<evidence type="ECO:0000269" key="9">
    <source>
    </source>
</evidence>
<evidence type="ECO:0000269" key="10">
    <source>
    </source>
</evidence>
<evidence type="ECO:0000269" key="11">
    <source ref="2"/>
</evidence>
<evidence type="ECO:0000303" key="12">
    <source>
    </source>
</evidence>
<evidence type="ECO:0000303" key="13">
    <source>
    </source>
</evidence>
<evidence type="ECO:0000305" key="14"/>
<evidence type="ECO:0000305" key="15">
    <source>
    </source>
</evidence>
<evidence type="ECO:0000312" key="16">
    <source>
        <dbReference type="HGNC" id="HGNC:1956"/>
    </source>
</evidence>
<evidence type="ECO:0007744" key="17">
    <source>
        <dbReference type="PDB" id="5FJV"/>
    </source>
</evidence>
<evidence type="ECO:0007829" key="18">
    <source>
        <dbReference type="PDB" id="5FJV"/>
    </source>
</evidence>
<accession>Q15822</accession>
<accession>A8KAX3</accession>
<accession>B4DK19</accession>
<accession>J3KMY9</accession>
<accession>Q9HAQ3</accession>
<protein>
    <recommendedName>
        <fullName>Neuronal acetylcholine receptor subunit alpha-2</fullName>
    </recommendedName>
    <alternativeName>
        <fullName evidence="14">Nicotinic acetylcholine receptor subunit alpha-2</fullName>
    </alternativeName>
</protein>
<keyword id="KW-0002">3D-structure</keyword>
<keyword id="KW-0025">Alternative splicing</keyword>
<keyword id="KW-1003">Cell membrane</keyword>
<keyword id="KW-0225">Disease variant</keyword>
<keyword id="KW-1015">Disulfide bond</keyword>
<keyword id="KW-0887">Epilepsy</keyword>
<keyword id="KW-0325">Glycoprotein</keyword>
<keyword id="KW-0407">Ion channel</keyword>
<keyword id="KW-0406">Ion transport</keyword>
<keyword id="KW-1071">Ligand-gated ion channel</keyword>
<keyword id="KW-0472">Membrane</keyword>
<keyword id="KW-1267">Proteomics identification</keyword>
<keyword id="KW-0675">Receptor</keyword>
<keyword id="KW-1185">Reference proteome</keyword>
<keyword id="KW-0732">Signal</keyword>
<keyword id="KW-0770">Synapse</keyword>
<keyword id="KW-0812">Transmembrane</keyword>
<keyword id="KW-1133">Transmembrane helix</keyword>
<keyword id="KW-0813">Transport</keyword>
<comment type="function">
    <text evidence="7 9 13">Component of neuronal acetylcholine receptors (nAChRs) that function as pentameric, ligand-gated cation channels with high calcium permeability among other activities. nAChRs are excitatory neurotrasnmitter receptors formed by a collection of nAChR subunits known to mediate synaptic transmission in the nervous system and the neuromuscular junction. Each nAchR subunit confers differential attributes to channel properties, including activation, deactivation and desensitization kinetics, pH sensitivity, cation permeability, and binding to allosteric modulators (PubMed:18723036). CHRNA2 forms heteropentameric neuronal acetylcholine receptors with CHRNB2 and CHRNB4 and plays a role in nicotine dependence (PubMed:24467848, PubMed:27493220).</text>
</comment>
<comment type="catalytic activity">
    <reaction evidence="2">
        <text>Ca(2+)(in) = Ca(2+)(out)</text>
        <dbReference type="Rhea" id="RHEA:29671"/>
        <dbReference type="ChEBI" id="CHEBI:29108"/>
    </reaction>
</comment>
<comment type="catalytic activity">
    <reaction evidence="1">
        <text>K(+)(in) = K(+)(out)</text>
        <dbReference type="Rhea" id="RHEA:29463"/>
        <dbReference type="ChEBI" id="CHEBI:29103"/>
    </reaction>
</comment>
<comment type="catalytic activity">
    <reaction evidence="2">
        <text>Na(+)(in) = Na(+)(out)</text>
        <dbReference type="Rhea" id="RHEA:34963"/>
        <dbReference type="ChEBI" id="CHEBI:29101"/>
    </reaction>
</comment>
<comment type="subunit">
    <text evidence="7 9">Neuronal AChR is composed of two different types of subunits: alpha and non-alpha (beta). CHRNA2/alpha-2 subunit can be combined to CHRNB2/beta-2 or CHRNB4/beta-4 to give rise to functional receptors. Both CHRNA2:CHRNB2 and CHRNA2:CHRNB4 nAChR complexes are heteropentamers with two subtypes: LS (low agonist sensitivity) with a (CHRNA2)3:(CHRNB2/4)2 and HS (high agonist sensitivity) with a (CHRNA2)2:(CHRNB2/4)3 stoichiometries; the subtypes differ in their subunit binding interfaces which are involved in ligand binding.</text>
</comment>
<comment type="subcellular location">
    <subcellularLocation>
        <location evidence="13">Synaptic cell membrane</location>
        <topology evidence="3">Multi-pass membrane protein</topology>
    </subcellularLocation>
    <subcellularLocation>
        <location evidence="13">Cell membrane</location>
        <topology evidence="3">Multi-pass membrane protein</topology>
    </subcellularLocation>
</comment>
<comment type="alternative products">
    <event type="alternative splicing"/>
    <isoform>
        <id>Q15822-1</id>
        <name>1</name>
        <sequence type="displayed"/>
    </isoform>
    <isoform>
        <id>Q15822-2</id>
        <name>2</name>
        <sequence type="described" ref="VSP_055156"/>
    </isoform>
</comment>
<comment type="disease" evidence="6">
    <disease id="DI-00821">
        <name>Epilepsy, nocturnal frontal lobe, 4</name>
        <acronym>ENFL4</acronym>
        <description>An autosomal dominant focal epilepsy characterized by nocturnal seizures associated with fear sensation, tongue movements, and nocturnal wandering, closely resembling nightmares and sleep walking.</description>
        <dbReference type="MIM" id="610353"/>
    </disease>
    <text>The disease is caused by variants affecting the gene represented in this entry.</text>
</comment>
<comment type="disease" evidence="8">
    <disease id="DI-05284">
        <name>Seizures, benign familial infantile, 6</name>
        <acronym>BFIS6</acronym>
        <description>A form of benign familial infantile epilepsy, a neurologic disorder characterized by afebrile seizures occurring in clusters during the first year of life, without neurologic sequelae. BFIS6 inheritance is autosomal dominant.</description>
        <dbReference type="MIM" id="610353"/>
    </disease>
    <text>The disease may be caused by variants affecting the gene represented in this entry.</text>
</comment>
<comment type="similarity">
    <text evidence="14">Belongs to the ligand-gated ion channel (TC 1.A.9) family. Acetylcholine receptor (TC 1.A.9.1) subfamily. Alpha-2/CHRNA2 sub-subfamily.</text>
</comment>
<comment type="caution">
    <text evidence="15">With the use of epibatidine as high affinity ligand, an alpha-2 homopentamer has been purified and crystallized. Its physiological relevance has not been proven.</text>
</comment>